<gene>
    <name evidence="3" type="primary">carD</name>
    <name type="ORF">FFUJ_07503</name>
</gene>
<organism>
    <name type="scientific">Gibberella fujikuroi (strain CBS 195.34 / IMI 58289 / NRRL A-6831)</name>
    <name type="common">Bakanae and foot rot disease fungus</name>
    <name type="synonym">Fusarium fujikuroi</name>
    <dbReference type="NCBI Taxonomy" id="1279085"/>
    <lineage>
        <taxon>Eukaryota</taxon>
        <taxon>Fungi</taxon>
        <taxon>Dikarya</taxon>
        <taxon>Ascomycota</taxon>
        <taxon>Pezizomycotina</taxon>
        <taxon>Sordariomycetes</taxon>
        <taxon>Hypocreomycetidae</taxon>
        <taxon>Hypocreales</taxon>
        <taxon>Nectriaceae</taxon>
        <taxon>Fusarium</taxon>
        <taxon>Fusarium fujikuroi species complex</taxon>
    </lineage>
</organism>
<name>CARD_GIBF5</name>
<feature type="chain" id="PRO_0000418443" description="Beta-apo-4'-carotenal oxygenase">
    <location>
        <begin position="1"/>
        <end position="539"/>
    </location>
</feature>
<feature type="active site" evidence="1">
    <location>
        <position position="228"/>
    </location>
</feature>
<feature type="active site" evidence="1">
    <location>
        <position position="262"/>
    </location>
</feature>
<feature type="sequence conflict" description="In Ref. 1; CCA63431." evidence="4" ref="1">
    <original>S</original>
    <variation>G</variation>
    <location>
        <position position="273"/>
    </location>
</feature>
<protein>
    <recommendedName>
        <fullName evidence="3">Beta-apo-4'-carotenal oxygenase</fullName>
        <ecNumber evidence="2">1.2.1.82</ecNumber>
    </recommendedName>
    <alternativeName>
        <fullName evidence="3">Beta-apo-4'-carotenal dehydrogenase</fullName>
    </alternativeName>
</protein>
<sequence>MAANNLSYTIAPLEHTPLDEIAAKVDLVRKTFRSGRTKDMEFRMKQIRKLYWAIVDNTELMQDALIKDLRKCKYEAVLAEIDWCKQECIDMVNNMEKWLRDEPVPNVPLQFRAMKHRTRFEPLGVVLNIGSFNFPFQLNLPVVIGAIACGNCVVLKASESSPNCAMVLKKIFDESLDPECFTYVNGALPETQLLLEQKFDKICFTGGKAVGKIIAQKAAETLTPVLLELGGLNPAFVTKHANLKLAARRLLWQKSLNAGQVCMSHNYILVERSVLSQFLGELNNQMRTFFPQGAKNSPDLCRIVNAGHFNRLKKMLDGTNGKIVLGGSMDESTLFMEPTAVLVDDINDSMMTQEAFGPIFAMMAVDSLDQAIDIANTVDPTPLSLSAFGSKAENNKILDNVTSGGATCNDAFFHSQIPQSPLGGVGQSGMGNYHGIYSIRTFSHQRTIAEVPYWADFLFRVRYMPYQWPVMNRMKAVADSKPNFDRNGNKTKGITYFLALVLGLGSKKSKGALLRWAVLVVAAAILEAKKGVLSQLLTR</sequence>
<comment type="function">
    <text evidence="2 5">Beta-apo-4'-carotenal oxygenase involved in the last step of synthesis of neurosporaxanthin, a carboxylic apocarotenoid acting as an essential protective pigments and leading to orange pigmentation (PubMed:21749649). Converts the aldehyde beta-apo-4'-carotenal into neurosporaxanthin (PubMed:21749649). Is also able to use shorter apocarotenals as substrates (such as beta-apo-8'-carotenal (C30), beta-apo-10'-carotenal (C27), or the acyclic apocarotenal apo-8'-lycopenal (C30)), indicating wide substrate specificity (PubMed:21749649). Neurosporaxanthin is synthesized from geranyl-geranyl pyrophosphate (GGPP) through several enzymatic activities. Phytoene synthase activity performed by the bifunctional enzyme carAR first produces phytoene from geranyl-geranyl pyrophosphate (GGPP). The phytoene dehydrogenase carB then introduces 4 desaturations to lead to lycopene which is substrate of the carotene cyclase activity of carAR that leads to the production of gamma-carotene. CarB then performs a 5th desaturation reaction to yield torulene. Torulene is the substrate of the dioxidase carT that breaks the molecule, removing five carbon atoms to yield beta-apo-4'-carotenal, whereas the aldehyde dehydrogenase carD mediates the last step by converting beta-apo-4'-carotenal into neurosporaxanthin (Probable).</text>
</comment>
<comment type="catalytic activity">
    <reaction evidence="2">
        <text>4'-apo-beta-carotenal + NAD(+) + H2O = neurosporaxanthin + NADH + 2 H(+)</text>
        <dbReference type="Rhea" id="RHEA:31515"/>
        <dbReference type="ChEBI" id="CHEBI:15377"/>
        <dbReference type="ChEBI" id="CHEBI:15378"/>
        <dbReference type="ChEBI" id="CHEBI:53157"/>
        <dbReference type="ChEBI" id="CHEBI:57540"/>
        <dbReference type="ChEBI" id="CHEBI:57945"/>
        <dbReference type="ChEBI" id="CHEBI:63069"/>
        <dbReference type="EC" id="1.2.1.82"/>
    </reaction>
    <physiologicalReaction direction="left-to-right" evidence="2">
        <dbReference type="Rhea" id="RHEA:31516"/>
    </physiologicalReaction>
</comment>
<comment type="induction">
    <text evidence="2">Expression is increased about three-fold after 30 minutes of illumination, and decreased thereafter.</text>
</comment>
<comment type="similarity">
    <text evidence="4">Belongs to the aldehyde dehydrogenase family.</text>
</comment>
<comment type="sequence caution" evidence="4">
    <conflict type="frameshift">
        <sequence resource="EMBL-CDS" id="CCA63431"/>
    </conflict>
</comment>
<proteinExistence type="evidence at protein level"/>
<dbReference type="EC" id="1.2.1.82" evidence="2"/>
<dbReference type="EMBL" id="FR850689">
    <property type="protein sequence ID" value="CCA63431.1"/>
    <property type="status" value="ALT_FRAME"/>
    <property type="molecule type" value="Genomic_DNA"/>
</dbReference>
<dbReference type="EMBL" id="HF679027">
    <property type="protein sequence ID" value="CCT68695.1"/>
    <property type="molecule type" value="Genomic_DNA"/>
</dbReference>
<dbReference type="SMR" id="F6IBC7"/>
<dbReference type="STRING" id="1279085.F6IBC7"/>
<dbReference type="EnsemblFungi" id="CCT68695">
    <property type="protein sequence ID" value="CCT68695"/>
    <property type="gene ID" value="FFUJ_07503"/>
</dbReference>
<dbReference type="KEGG" id="ag:CCA63431"/>
<dbReference type="VEuPathDB" id="FungiDB:FFUJ_07503"/>
<dbReference type="HOGENOM" id="CLU_005391_3_1_1"/>
<dbReference type="BRENDA" id="1.2.1.82">
    <property type="organism ID" value="2425"/>
</dbReference>
<dbReference type="Proteomes" id="UP000016800">
    <property type="component" value="Chromosome 5"/>
</dbReference>
<dbReference type="GO" id="GO:0005737">
    <property type="term" value="C:cytoplasm"/>
    <property type="evidence" value="ECO:0007669"/>
    <property type="project" value="TreeGrafter"/>
</dbReference>
<dbReference type="GO" id="GO:0004029">
    <property type="term" value="F:aldehyde dehydrogenase (NAD+) activity"/>
    <property type="evidence" value="ECO:0007669"/>
    <property type="project" value="TreeGrafter"/>
</dbReference>
<dbReference type="GO" id="GO:0006081">
    <property type="term" value="P:aldehyde metabolic process"/>
    <property type="evidence" value="ECO:0007669"/>
    <property type="project" value="InterPro"/>
</dbReference>
<dbReference type="GO" id="GO:0016117">
    <property type="term" value="P:carotenoid biosynthetic process"/>
    <property type="evidence" value="ECO:0007669"/>
    <property type="project" value="UniProtKB-KW"/>
</dbReference>
<dbReference type="CDD" id="cd07135">
    <property type="entry name" value="ALDH_F14-YMR110C"/>
    <property type="match status" value="1"/>
</dbReference>
<dbReference type="FunFam" id="3.40.605.10:FF:000004">
    <property type="entry name" value="Aldehyde dehydrogenase"/>
    <property type="match status" value="1"/>
</dbReference>
<dbReference type="Gene3D" id="3.40.605.10">
    <property type="entry name" value="Aldehyde Dehydrogenase, Chain A, domain 1"/>
    <property type="match status" value="1"/>
</dbReference>
<dbReference type="Gene3D" id="3.40.309.10">
    <property type="entry name" value="Aldehyde Dehydrogenase, Chain A, domain 2"/>
    <property type="match status" value="1"/>
</dbReference>
<dbReference type="InterPro" id="IPR016161">
    <property type="entry name" value="Ald_DH/histidinol_DH"/>
</dbReference>
<dbReference type="InterPro" id="IPR016163">
    <property type="entry name" value="Ald_DH_C"/>
</dbReference>
<dbReference type="InterPro" id="IPR029510">
    <property type="entry name" value="Ald_DH_CS_GLU"/>
</dbReference>
<dbReference type="InterPro" id="IPR016162">
    <property type="entry name" value="Ald_DH_N"/>
</dbReference>
<dbReference type="InterPro" id="IPR015590">
    <property type="entry name" value="Aldehyde_DH_dom"/>
</dbReference>
<dbReference type="InterPro" id="IPR012394">
    <property type="entry name" value="Aldehyde_DH_NAD(P)"/>
</dbReference>
<dbReference type="PANTHER" id="PTHR43570">
    <property type="entry name" value="ALDEHYDE DEHYDROGENASE"/>
    <property type="match status" value="1"/>
</dbReference>
<dbReference type="PANTHER" id="PTHR43570:SF11">
    <property type="entry name" value="ALDEHYDE DEHYDROGENASE"/>
    <property type="match status" value="1"/>
</dbReference>
<dbReference type="Pfam" id="PF00171">
    <property type="entry name" value="Aldedh"/>
    <property type="match status" value="1"/>
</dbReference>
<dbReference type="PIRSF" id="PIRSF036492">
    <property type="entry name" value="ALDH"/>
    <property type="match status" value="1"/>
</dbReference>
<dbReference type="SUPFAM" id="SSF53720">
    <property type="entry name" value="ALDH-like"/>
    <property type="match status" value="1"/>
</dbReference>
<dbReference type="PROSITE" id="PS00687">
    <property type="entry name" value="ALDEHYDE_DEHYDR_GLU"/>
    <property type="match status" value="1"/>
</dbReference>
<accession>F6IBC7</accession>
<accession>S0E1W7</accession>
<evidence type="ECO:0000250" key="1">
    <source>
        <dbReference type="UniProtKB" id="P30838"/>
    </source>
</evidence>
<evidence type="ECO:0000269" key="2">
    <source>
    </source>
</evidence>
<evidence type="ECO:0000303" key="3">
    <source>
    </source>
</evidence>
<evidence type="ECO:0000305" key="4"/>
<evidence type="ECO:0000305" key="5">
    <source>
    </source>
</evidence>
<reference key="1">
    <citation type="journal article" date="2011" name="FEBS J.">
        <title>The gene carD encodes the aldehyde dehydrogenase responsible for neurosporaxanthin biosynthesis in Fusarium fujikuroi.</title>
        <authorList>
            <person name="Diaz-Sanchez V."/>
            <person name="Estrada A.F."/>
            <person name="Trautmann D."/>
            <person name="Al-Babili S."/>
            <person name="Avalos J."/>
        </authorList>
    </citation>
    <scope>NUCLEOTIDE SEQUENCE [GENOMIC DNA]</scope>
    <scope>CATALYTIC ACTIVITY</scope>
    <scope>FUNCTION</scope>
    <scope>INDUCTION</scope>
    <source>
        <strain>CBS 195.34 / IMI 58289 / NRRL A-6831</strain>
    </source>
</reference>
<reference key="2">
    <citation type="journal article" date="2013" name="PLoS Pathog.">
        <title>Deciphering the cryptic genome: genome-wide analyses of the rice pathogen Fusarium fujikuroi reveal complex regulation of secondary metabolism and novel metabolites.</title>
        <authorList>
            <person name="Wiemann P."/>
            <person name="Sieber C.M.K."/>
            <person name="von Bargen K.W."/>
            <person name="Studt L."/>
            <person name="Niehaus E.-M."/>
            <person name="Espino J.J."/>
            <person name="Huss K."/>
            <person name="Michielse C.B."/>
            <person name="Albermann S."/>
            <person name="Wagner D."/>
            <person name="Bergner S.V."/>
            <person name="Connolly L.R."/>
            <person name="Fischer A."/>
            <person name="Reuter G."/>
            <person name="Kleigrewe K."/>
            <person name="Bald T."/>
            <person name="Wingfield B.D."/>
            <person name="Ophir R."/>
            <person name="Freeman S."/>
            <person name="Hippler M."/>
            <person name="Smith K.M."/>
            <person name="Brown D.W."/>
            <person name="Proctor R.H."/>
            <person name="Muensterkoetter M."/>
            <person name="Freitag M."/>
            <person name="Humpf H.-U."/>
            <person name="Gueldener U."/>
            <person name="Tudzynski B."/>
        </authorList>
    </citation>
    <scope>NUCLEOTIDE SEQUENCE [LARGE SCALE GENOMIC DNA]</scope>
    <source>
        <strain>CBS 195.34 / IMI 58289 / NRRL A-6831</strain>
    </source>
</reference>
<keyword id="KW-0125">Carotenoid biosynthesis</keyword>
<keyword id="KW-0520">NAD</keyword>
<keyword id="KW-0560">Oxidoreductase</keyword>
<keyword id="KW-1185">Reference proteome</keyword>